<accession>A7H4D7</accession>
<gene>
    <name evidence="1" type="primary">flgH</name>
    <name type="ordered locus">JJD26997_1320</name>
</gene>
<keyword id="KW-0975">Bacterial flagellum</keyword>
<keyword id="KW-0998">Cell outer membrane</keyword>
<keyword id="KW-0449">Lipoprotein</keyword>
<keyword id="KW-0472">Membrane</keyword>
<keyword id="KW-0564">Palmitate</keyword>
<keyword id="KW-0732">Signal</keyword>
<sequence>MKKVLFYVLPFAFFGCSATVDPQISMKPPAYVEELAPKQSNNVESAPGSLFGKGDNPLFSDKKAMNVNDLVTVIIQESTTQSTQANKATSRTNTSNLDGGTLTGSSGVVASALDKVNAYSNIGFQTNSSNNYTGTGSQSRNESFNTTISTRVIKILSNGNYFIEGSRELLINGEKQIIQLSGVIRPYDIGQDNTIDSKYIADAKILYKTEGEVDRSTRKPWGSKVIEAIWPF</sequence>
<dbReference type="EMBL" id="CP000768">
    <property type="protein sequence ID" value="ABS43527.1"/>
    <property type="molecule type" value="Genomic_DNA"/>
</dbReference>
<dbReference type="SMR" id="A7H4D7"/>
<dbReference type="KEGG" id="cjd:JJD26997_1320"/>
<dbReference type="HOGENOM" id="CLU_069313_1_1_7"/>
<dbReference type="Proteomes" id="UP000002302">
    <property type="component" value="Chromosome"/>
</dbReference>
<dbReference type="GO" id="GO:0009427">
    <property type="term" value="C:bacterial-type flagellum basal body, distal rod, L ring"/>
    <property type="evidence" value="ECO:0007669"/>
    <property type="project" value="InterPro"/>
</dbReference>
<dbReference type="GO" id="GO:0009279">
    <property type="term" value="C:cell outer membrane"/>
    <property type="evidence" value="ECO:0007669"/>
    <property type="project" value="UniProtKB-SubCell"/>
</dbReference>
<dbReference type="GO" id="GO:0003774">
    <property type="term" value="F:cytoskeletal motor activity"/>
    <property type="evidence" value="ECO:0007669"/>
    <property type="project" value="InterPro"/>
</dbReference>
<dbReference type="GO" id="GO:0071973">
    <property type="term" value="P:bacterial-type flagellum-dependent cell motility"/>
    <property type="evidence" value="ECO:0007669"/>
    <property type="project" value="InterPro"/>
</dbReference>
<dbReference type="HAMAP" id="MF_00415">
    <property type="entry name" value="FlgH"/>
    <property type="match status" value="1"/>
</dbReference>
<dbReference type="InterPro" id="IPR000527">
    <property type="entry name" value="Flag_Lring"/>
</dbReference>
<dbReference type="NCBIfam" id="NF001303">
    <property type="entry name" value="PRK00249.1-3"/>
    <property type="match status" value="1"/>
</dbReference>
<dbReference type="PANTHER" id="PTHR34933">
    <property type="entry name" value="FLAGELLAR L-RING PROTEIN"/>
    <property type="match status" value="1"/>
</dbReference>
<dbReference type="PANTHER" id="PTHR34933:SF1">
    <property type="entry name" value="FLAGELLAR L-RING PROTEIN"/>
    <property type="match status" value="1"/>
</dbReference>
<dbReference type="Pfam" id="PF02107">
    <property type="entry name" value="FlgH"/>
    <property type="match status" value="1"/>
</dbReference>
<dbReference type="PRINTS" id="PR01008">
    <property type="entry name" value="FLGLRINGFLGH"/>
</dbReference>
<dbReference type="PROSITE" id="PS51257">
    <property type="entry name" value="PROKAR_LIPOPROTEIN"/>
    <property type="match status" value="1"/>
</dbReference>
<comment type="function">
    <text evidence="1">Assembles around the rod to form the L-ring and probably protects the motor/basal body from shearing forces during rotation.</text>
</comment>
<comment type="subunit">
    <text evidence="1">The basal body constitutes a major portion of the flagellar organelle and consists of four rings (L,P,S, and M) mounted on a central rod.</text>
</comment>
<comment type="subcellular location">
    <subcellularLocation>
        <location evidence="1">Cell outer membrane</location>
        <topology evidence="1">Lipid-anchor</topology>
    </subcellularLocation>
    <subcellularLocation>
        <location evidence="1">Bacterial flagellum basal body</location>
    </subcellularLocation>
</comment>
<comment type="similarity">
    <text evidence="1">Belongs to the FlgH family.</text>
</comment>
<feature type="signal peptide" evidence="1">
    <location>
        <begin position="1"/>
        <end position="15"/>
    </location>
</feature>
<feature type="chain" id="PRO_1000050085" description="Flagellar L-ring protein">
    <location>
        <begin position="16"/>
        <end position="232"/>
    </location>
</feature>
<feature type="lipid moiety-binding region" description="N-palmitoyl cysteine" evidence="1">
    <location>
        <position position="16"/>
    </location>
</feature>
<feature type="lipid moiety-binding region" description="S-diacylglycerol cysteine" evidence="1">
    <location>
        <position position="16"/>
    </location>
</feature>
<name>FLGH_CAMJD</name>
<protein>
    <recommendedName>
        <fullName evidence="1">Flagellar L-ring protein</fullName>
    </recommendedName>
    <alternativeName>
        <fullName evidence="1">Basal body L-ring protein</fullName>
    </alternativeName>
</protein>
<reference key="1">
    <citation type="submission" date="2007-07" db="EMBL/GenBank/DDBJ databases">
        <title>Complete genome sequence of Campylobacter jejuni subsp doylei 269.97 isolated from human blood.</title>
        <authorList>
            <person name="Fouts D.E."/>
            <person name="Mongodin E.F."/>
            <person name="Puiu D."/>
            <person name="Sebastian Y."/>
            <person name="Miller W.G."/>
            <person name="Mandrell R.E."/>
            <person name="Lastovica A.J."/>
            <person name="Nelson K.E."/>
        </authorList>
    </citation>
    <scope>NUCLEOTIDE SEQUENCE [LARGE SCALE GENOMIC DNA]</scope>
    <source>
        <strain>ATCC BAA-1458 / RM4099 / 269.97</strain>
    </source>
</reference>
<evidence type="ECO:0000255" key="1">
    <source>
        <dbReference type="HAMAP-Rule" id="MF_00415"/>
    </source>
</evidence>
<organism>
    <name type="scientific">Campylobacter jejuni subsp. doylei (strain ATCC BAA-1458 / RM4099 / 269.97)</name>
    <dbReference type="NCBI Taxonomy" id="360109"/>
    <lineage>
        <taxon>Bacteria</taxon>
        <taxon>Pseudomonadati</taxon>
        <taxon>Campylobacterota</taxon>
        <taxon>Epsilonproteobacteria</taxon>
        <taxon>Campylobacterales</taxon>
        <taxon>Campylobacteraceae</taxon>
        <taxon>Campylobacter</taxon>
    </lineage>
</organism>
<proteinExistence type="inferred from homology"/>